<organism>
    <name type="scientific">Clostridium beijerinckii (strain ATCC 51743 / NCIMB 8052)</name>
    <name type="common">Clostridium acetobutylicum</name>
    <dbReference type="NCBI Taxonomy" id="290402"/>
    <lineage>
        <taxon>Bacteria</taxon>
        <taxon>Bacillati</taxon>
        <taxon>Bacillota</taxon>
        <taxon>Clostridia</taxon>
        <taxon>Eubacteriales</taxon>
        <taxon>Clostridiaceae</taxon>
        <taxon>Clostridium</taxon>
    </lineage>
</organism>
<feature type="chain" id="PRO_0000363078" description="Fructose-1,6-bisphosphatase class 3 1">
    <location>
        <begin position="1"/>
        <end position="663"/>
    </location>
</feature>
<dbReference type="EC" id="3.1.3.11" evidence="1"/>
<dbReference type="EMBL" id="CP000721">
    <property type="protein sequence ID" value="ABR34625.1"/>
    <property type="molecule type" value="Genomic_DNA"/>
</dbReference>
<dbReference type="RefSeq" id="WP_012058681.1">
    <property type="nucleotide sequence ID" value="NC_009617.1"/>
</dbReference>
<dbReference type="KEGG" id="cbe:Cbei_2467"/>
<dbReference type="eggNOG" id="COG3855">
    <property type="taxonomic scope" value="Bacteria"/>
</dbReference>
<dbReference type="HOGENOM" id="CLU_028392_2_0_9"/>
<dbReference type="UniPathway" id="UPA00138"/>
<dbReference type="Proteomes" id="UP000000565">
    <property type="component" value="Chromosome"/>
</dbReference>
<dbReference type="GO" id="GO:0042132">
    <property type="term" value="F:fructose 1,6-bisphosphate 1-phosphatase activity"/>
    <property type="evidence" value="ECO:0007669"/>
    <property type="project" value="UniProtKB-UniRule"/>
</dbReference>
<dbReference type="GO" id="GO:0006094">
    <property type="term" value="P:gluconeogenesis"/>
    <property type="evidence" value="ECO:0007669"/>
    <property type="project" value="UniProtKB-UniRule"/>
</dbReference>
<dbReference type="Gene3D" id="3.60.21.10">
    <property type="match status" value="1"/>
</dbReference>
<dbReference type="HAMAP" id="MF_01854">
    <property type="entry name" value="FBPase_class3"/>
    <property type="match status" value="1"/>
</dbReference>
<dbReference type="InterPro" id="IPR009164">
    <property type="entry name" value="FBPtase_class3"/>
</dbReference>
<dbReference type="InterPro" id="IPR029052">
    <property type="entry name" value="Metallo-depent_PP-like"/>
</dbReference>
<dbReference type="Pfam" id="PF06874">
    <property type="entry name" value="FBPase_2"/>
    <property type="match status" value="1"/>
</dbReference>
<dbReference type="PIRSF" id="PIRSF000906">
    <property type="entry name" value="FBPtase_Bacill"/>
    <property type="match status" value="1"/>
</dbReference>
<dbReference type="SUPFAM" id="SSF56300">
    <property type="entry name" value="Metallo-dependent phosphatases"/>
    <property type="match status" value="2"/>
</dbReference>
<accession>A6LW95</accession>
<comment type="catalytic activity">
    <reaction evidence="1">
        <text>beta-D-fructose 1,6-bisphosphate + H2O = beta-D-fructose 6-phosphate + phosphate</text>
        <dbReference type="Rhea" id="RHEA:11064"/>
        <dbReference type="ChEBI" id="CHEBI:15377"/>
        <dbReference type="ChEBI" id="CHEBI:32966"/>
        <dbReference type="ChEBI" id="CHEBI:43474"/>
        <dbReference type="ChEBI" id="CHEBI:57634"/>
        <dbReference type="EC" id="3.1.3.11"/>
    </reaction>
</comment>
<comment type="cofactor">
    <cofactor evidence="1">
        <name>Mn(2+)</name>
        <dbReference type="ChEBI" id="CHEBI:29035"/>
    </cofactor>
</comment>
<comment type="pathway">
    <text evidence="1">Carbohydrate biosynthesis; gluconeogenesis.</text>
</comment>
<comment type="similarity">
    <text evidence="1">Belongs to the FBPase class 3 family.</text>
</comment>
<keyword id="KW-0119">Carbohydrate metabolism</keyword>
<keyword id="KW-0378">Hydrolase</keyword>
<keyword id="KW-0464">Manganese</keyword>
<evidence type="ECO:0000255" key="1">
    <source>
        <dbReference type="HAMAP-Rule" id="MF_01854"/>
    </source>
</evidence>
<gene>
    <name evidence="1" type="primary">fbp1</name>
    <name type="ordered locus">Cbei_2467</name>
</gene>
<reference key="1">
    <citation type="submission" date="2007-06" db="EMBL/GenBank/DDBJ databases">
        <title>Complete sequence of Clostridium beijerinckii NCIMB 8052.</title>
        <authorList>
            <consortium name="US DOE Joint Genome Institute"/>
            <person name="Copeland A."/>
            <person name="Lucas S."/>
            <person name="Lapidus A."/>
            <person name="Barry K."/>
            <person name="Detter J.C."/>
            <person name="Glavina del Rio T."/>
            <person name="Hammon N."/>
            <person name="Israni S."/>
            <person name="Dalin E."/>
            <person name="Tice H."/>
            <person name="Pitluck S."/>
            <person name="Sims D."/>
            <person name="Brettin T."/>
            <person name="Bruce D."/>
            <person name="Tapia R."/>
            <person name="Brainard J."/>
            <person name="Schmutz J."/>
            <person name="Larimer F."/>
            <person name="Land M."/>
            <person name="Hauser L."/>
            <person name="Kyrpides N."/>
            <person name="Mikhailova N."/>
            <person name="Bennet G."/>
            <person name="Cann I."/>
            <person name="Chen J.-S."/>
            <person name="Contreras A.L."/>
            <person name="Jones D."/>
            <person name="Kashket E."/>
            <person name="Mitchell W."/>
            <person name="Stoddard S."/>
            <person name="Schwarz W."/>
            <person name="Qureshi N."/>
            <person name="Young M."/>
            <person name="Shi Z."/>
            <person name="Ezeji T."/>
            <person name="White B."/>
            <person name="Blaschek H."/>
            <person name="Richardson P."/>
        </authorList>
    </citation>
    <scope>NUCLEOTIDE SEQUENCE [LARGE SCALE GENOMIC DNA]</scope>
    <source>
        <strain>ATCC 51743 / NCIMB 8052</strain>
    </source>
</reference>
<sequence length="663" mass="76856">MKKYDLSTNEISDNLRYLELLSKQYPTINEASTEIINLQAILNLPKGTEHFLTDIHGEYEPFIHVLKNASGVIKRKIEDLFGNSLMQSEKKSLATLIYYPEQKLEIVLKQEENIDDWYKINLYRLIEICRYVSSKYTRSKVRKALPKDFTYIIEELLHEQPKGIDKYEYYEQIIRTIIDTDRSKEFIVALSKLIQRLVIDRLHILGDIFDRGPGADIIMDTLVEYHSVDIQWGNHDILWMGAACGSDVCIANVIKNSLKYANLDTLENGYGINLLPLATFSMDFYKDHPCNIFLPKMDCDKKYSINEINLIAQMHKAIAIILFKLEGQVILRHPEFNMNHRLLLNKINYAEGTINLNGKTHKLKDSFFPTIDPKNPYELTYDEKELIDKLKTSFINSDKYNKHVRFLYSNGSLYLKFNSNLLYHGFIPLNEDGSFKKVKIADKEYKGKELLDKLDMLAREAYFSKDKDDSDNKKDIMWYLWCGASSPLFGKDRMTIFEQYFIEEKETHYEKKDPYFSLRDNEDICKKILKEFGLSSPESHIINGHMPVEEKNGESPIKANGTLLVIDGGFSKAYQPKTGLAGYTLIYNSFGLQLVSHQPFESTEAAIKEETDILSTTLLLEQVVNRKRVEDTDVGVTLKQQIDDLKMLLNAYRKGLIKQQNKI</sequence>
<proteinExistence type="inferred from homology"/>
<name>F16C1_CLOB8</name>
<protein>
    <recommendedName>
        <fullName evidence="1">Fructose-1,6-bisphosphatase class 3 1</fullName>
        <shortName evidence="1">FBPase class 3 1</shortName>
        <ecNumber evidence="1">3.1.3.11</ecNumber>
    </recommendedName>
    <alternativeName>
        <fullName evidence="1">D-fructose-1,6-bisphosphate 1-phosphohydrolase class 3 1</fullName>
    </alternativeName>
</protein>